<reference key="1">
    <citation type="journal article" date="2002" name="J. Bacteriol.">
        <title>Whole-genome comparison of Mycobacterium tuberculosis clinical and laboratory strains.</title>
        <authorList>
            <person name="Fleischmann R.D."/>
            <person name="Alland D."/>
            <person name="Eisen J.A."/>
            <person name="Carpenter L."/>
            <person name="White O."/>
            <person name="Peterson J.D."/>
            <person name="DeBoy R.T."/>
            <person name="Dodson R.J."/>
            <person name="Gwinn M.L."/>
            <person name="Haft D.H."/>
            <person name="Hickey E.K."/>
            <person name="Kolonay J.F."/>
            <person name="Nelson W.C."/>
            <person name="Umayam L.A."/>
            <person name="Ermolaeva M.D."/>
            <person name="Salzberg S.L."/>
            <person name="Delcher A."/>
            <person name="Utterback T.R."/>
            <person name="Weidman J.F."/>
            <person name="Khouri H.M."/>
            <person name="Gill J."/>
            <person name="Mikula A."/>
            <person name="Bishai W."/>
            <person name="Jacobs W.R. Jr."/>
            <person name="Venter J.C."/>
            <person name="Fraser C.M."/>
        </authorList>
    </citation>
    <scope>NUCLEOTIDE SEQUENCE [LARGE SCALE GENOMIC DNA]</scope>
    <source>
        <strain>CDC 1551 / Oshkosh</strain>
    </source>
</reference>
<dbReference type="EMBL" id="AE000516">
    <property type="protein sequence ID" value="AAK47047.1"/>
    <property type="molecule type" value="Genomic_DNA"/>
</dbReference>
<dbReference type="PIR" id="D70966">
    <property type="entry name" value="D70966"/>
</dbReference>
<dbReference type="RefSeq" id="WP_003899417.1">
    <property type="nucleotide sequence ID" value="NZ_KK341227.1"/>
</dbReference>
<dbReference type="KEGG" id="mtc:MT2733"/>
<dbReference type="PATRIC" id="fig|83331.31.peg.2943"/>
<dbReference type="HOGENOM" id="CLU_157627_0_0_11"/>
<dbReference type="Proteomes" id="UP000001020">
    <property type="component" value="Chromosome"/>
</dbReference>
<dbReference type="InterPro" id="IPR024384">
    <property type="entry name" value="DUF2742"/>
</dbReference>
<dbReference type="Pfam" id="PF10888">
    <property type="entry name" value="DUF2742"/>
    <property type="match status" value="1"/>
</dbReference>
<keyword id="KW-1185">Reference proteome</keyword>
<comment type="similarity">
    <text evidence="2">To M.tuberculosis Rv1583c.</text>
</comment>
<organism>
    <name type="scientific">Mycobacterium tuberculosis (strain CDC 1551 / Oshkosh)</name>
    <dbReference type="NCBI Taxonomy" id="83331"/>
    <lineage>
        <taxon>Bacteria</taxon>
        <taxon>Bacillati</taxon>
        <taxon>Actinomycetota</taxon>
        <taxon>Actinomycetes</taxon>
        <taxon>Mycobacteriales</taxon>
        <taxon>Mycobacteriaceae</taxon>
        <taxon>Mycobacterium</taxon>
        <taxon>Mycobacterium tuberculosis complex</taxon>
    </lineage>
</organism>
<evidence type="ECO:0000256" key="1">
    <source>
        <dbReference type="SAM" id="MobiDB-lite"/>
    </source>
</evidence>
<evidence type="ECO:0000305" key="2"/>
<feature type="chain" id="PRO_0000427541" description="Uncharacterized protein MT2733">
    <location>
        <begin position="1"/>
        <end position="130"/>
    </location>
</feature>
<feature type="region of interest" description="Disordered" evidence="1">
    <location>
        <begin position="1"/>
        <end position="34"/>
    </location>
</feature>
<name>Y2656_MYCTO</name>
<proteinExistence type="predicted"/>
<gene>
    <name type="ordered locus">MT2733</name>
</gene>
<accession>P9WL48</accession>
<accession>L0TBW2</accession>
<accession>P71953</accession>
<sequence length="130" mass="14047">MTAVGGSPPTRRCPATEDRAPATVATPSSTDPTASRAVSWWSVHEYVAPTLAAAVEWPMAGTPAWCDLDDTDPVKWAAICDAARHWALRVETCQAASAEASRDVSAAADWPAVSREIQRRRDAYIRRVVV</sequence>
<protein>
    <recommendedName>
        <fullName>Uncharacterized protein MT2733</fullName>
    </recommendedName>
</protein>